<protein>
    <recommendedName>
        <fullName evidence="1">Imidazolonepropionase</fullName>
        <ecNumber evidence="1">3.5.2.7</ecNumber>
    </recommendedName>
    <alternativeName>
        <fullName evidence="1">Imidazolone-5-propionate hydrolase</fullName>
    </alternativeName>
</protein>
<proteinExistence type="inferred from homology"/>
<organism>
    <name type="scientific">Burkholderia ambifaria (strain MC40-6)</name>
    <dbReference type="NCBI Taxonomy" id="398577"/>
    <lineage>
        <taxon>Bacteria</taxon>
        <taxon>Pseudomonadati</taxon>
        <taxon>Pseudomonadota</taxon>
        <taxon>Betaproteobacteria</taxon>
        <taxon>Burkholderiales</taxon>
        <taxon>Burkholderiaceae</taxon>
        <taxon>Burkholderia</taxon>
        <taxon>Burkholderia cepacia complex</taxon>
    </lineage>
</organism>
<gene>
    <name evidence="1" type="primary">hutI</name>
    <name type="ordered locus">BamMC406_2084</name>
</gene>
<comment type="function">
    <text evidence="1">Catalyzes the hydrolytic cleavage of the carbon-nitrogen bond in imidazolone-5-propanoate to yield N-formimidoyl-L-glutamate. It is the third step in the universal histidine degradation pathway.</text>
</comment>
<comment type="catalytic activity">
    <reaction evidence="1">
        <text>4-imidazolone-5-propanoate + H2O = N-formimidoyl-L-glutamate</text>
        <dbReference type="Rhea" id="RHEA:23660"/>
        <dbReference type="ChEBI" id="CHEBI:15377"/>
        <dbReference type="ChEBI" id="CHEBI:58928"/>
        <dbReference type="ChEBI" id="CHEBI:77893"/>
        <dbReference type="EC" id="3.5.2.7"/>
    </reaction>
</comment>
<comment type="cofactor">
    <cofactor evidence="1">
        <name>Zn(2+)</name>
        <dbReference type="ChEBI" id="CHEBI:29105"/>
    </cofactor>
    <cofactor evidence="1">
        <name>Fe(3+)</name>
        <dbReference type="ChEBI" id="CHEBI:29034"/>
    </cofactor>
    <text evidence="1">Binds 1 zinc or iron ion per subunit.</text>
</comment>
<comment type="pathway">
    <text evidence="1">Amino-acid degradation; L-histidine degradation into L-glutamate; N-formimidoyl-L-glutamate from L-histidine: step 3/3.</text>
</comment>
<comment type="subcellular location">
    <subcellularLocation>
        <location evidence="1">Cytoplasm</location>
    </subcellularLocation>
</comment>
<comment type="similarity">
    <text evidence="1">Belongs to the metallo-dependent hydrolases superfamily. HutI family.</text>
</comment>
<name>HUTI_BURA4</name>
<keyword id="KW-0963">Cytoplasm</keyword>
<keyword id="KW-0369">Histidine metabolism</keyword>
<keyword id="KW-0378">Hydrolase</keyword>
<keyword id="KW-0408">Iron</keyword>
<keyword id="KW-0479">Metal-binding</keyword>
<keyword id="KW-0862">Zinc</keyword>
<reference key="1">
    <citation type="submission" date="2008-04" db="EMBL/GenBank/DDBJ databases">
        <title>Complete sequence of chromosome 1 of Burkholderia ambifaria MC40-6.</title>
        <authorList>
            <person name="Copeland A."/>
            <person name="Lucas S."/>
            <person name="Lapidus A."/>
            <person name="Glavina del Rio T."/>
            <person name="Dalin E."/>
            <person name="Tice H."/>
            <person name="Pitluck S."/>
            <person name="Chain P."/>
            <person name="Malfatti S."/>
            <person name="Shin M."/>
            <person name="Vergez L."/>
            <person name="Lang D."/>
            <person name="Schmutz J."/>
            <person name="Larimer F."/>
            <person name="Land M."/>
            <person name="Hauser L."/>
            <person name="Kyrpides N."/>
            <person name="Lykidis A."/>
            <person name="Ramette A."/>
            <person name="Konstantinidis K."/>
            <person name="Tiedje J."/>
            <person name="Richardson P."/>
        </authorList>
    </citation>
    <scope>NUCLEOTIDE SEQUENCE [LARGE SCALE GENOMIC DNA]</scope>
    <source>
        <strain>MC40-6</strain>
    </source>
</reference>
<feature type="chain" id="PRO_1000121535" description="Imidazolonepropionase">
    <location>
        <begin position="1"/>
        <end position="407"/>
    </location>
</feature>
<feature type="binding site" evidence="1">
    <location>
        <position position="68"/>
    </location>
    <ligand>
        <name>Fe(3+)</name>
        <dbReference type="ChEBI" id="CHEBI:29034"/>
    </ligand>
</feature>
<feature type="binding site" evidence="1">
    <location>
        <position position="68"/>
    </location>
    <ligand>
        <name>Zn(2+)</name>
        <dbReference type="ChEBI" id="CHEBI:29105"/>
    </ligand>
</feature>
<feature type="binding site" evidence="1">
    <location>
        <position position="70"/>
    </location>
    <ligand>
        <name>Fe(3+)</name>
        <dbReference type="ChEBI" id="CHEBI:29034"/>
    </ligand>
</feature>
<feature type="binding site" evidence="1">
    <location>
        <position position="70"/>
    </location>
    <ligand>
        <name>Zn(2+)</name>
        <dbReference type="ChEBI" id="CHEBI:29105"/>
    </ligand>
</feature>
<feature type="binding site" evidence="1">
    <location>
        <position position="77"/>
    </location>
    <ligand>
        <name>4-imidazolone-5-propanoate</name>
        <dbReference type="ChEBI" id="CHEBI:77893"/>
    </ligand>
</feature>
<feature type="binding site" evidence="1">
    <location>
        <position position="140"/>
    </location>
    <ligand>
        <name>4-imidazolone-5-propanoate</name>
        <dbReference type="ChEBI" id="CHEBI:77893"/>
    </ligand>
</feature>
<feature type="binding site" evidence="1">
    <location>
        <position position="140"/>
    </location>
    <ligand>
        <name>N-formimidoyl-L-glutamate</name>
        <dbReference type="ChEBI" id="CHEBI:58928"/>
    </ligand>
</feature>
<feature type="binding site" evidence="1">
    <location>
        <position position="173"/>
    </location>
    <ligand>
        <name>4-imidazolone-5-propanoate</name>
        <dbReference type="ChEBI" id="CHEBI:77893"/>
    </ligand>
</feature>
<feature type="binding site" evidence="1">
    <location>
        <position position="238"/>
    </location>
    <ligand>
        <name>Fe(3+)</name>
        <dbReference type="ChEBI" id="CHEBI:29034"/>
    </ligand>
</feature>
<feature type="binding site" evidence="1">
    <location>
        <position position="238"/>
    </location>
    <ligand>
        <name>Zn(2+)</name>
        <dbReference type="ChEBI" id="CHEBI:29105"/>
    </ligand>
</feature>
<feature type="binding site" evidence="1">
    <location>
        <position position="241"/>
    </location>
    <ligand>
        <name>4-imidazolone-5-propanoate</name>
        <dbReference type="ChEBI" id="CHEBI:77893"/>
    </ligand>
</feature>
<feature type="binding site" evidence="1">
    <location>
        <position position="313"/>
    </location>
    <ligand>
        <name>Fe(3+)</name>
        <dbReference type="ChEBI" id="CHEBI:29034"/>
    </ligand>
</feature>
<feature type="binding site" evidence="1">
    <location>
        <position position="313"/>
    </location>
    <ligand>
        <name>Zn(2+)</name>
        <dbReference type="ChEBI" id="CHEBI:29105"/>
    </ligand>
</feature>
<feature type="binding site" evidence="1">
    <location>
        <position position="315"/>
    </location>
    <ligand>
        <name>N-formimidoyl-L-glutamate</name>
        <dbReference type="ChEBI" id="CHEBI:58928"/>
    </ligand>
</feature>
<feature type="binding site" evidence="1">
    <location>
        <position position="317"/>
    </location>
    <ligand>
        <name>N-formimidoyl-L-glutamate</name>
        <dbReference type="ChEBI" id="CHEBI:58928"/>
    </ligand>
</feature>
<feature type="binding site" evidence="1">
    <location>
        <position position="318"/>
    </location>
    <ligand>
        <name>4-imidazolone-5-propanoate</name>
        <dbReference type="ChEBI" id="CHEBI:77893"/>
    </ligand>
</feature>
<evidence type="ECO:0000255" key="1">
    <source>
        <dbReference type="HAMAP-Rule" id="MF_00372"/>
    </source>
</evidence>
<sequence length="407" mass="44098">MKPTVWHHLRLCPHGHPDETIDDAAIAVDETGTIVWLGAFSALPHGYAHWQREDLHGAWVTPGLVDCHTHLVYGGTRADEFAQRLAGVSYEEIARQGGGIVSTVRATRAADETTLFVQAAARLQPLLAEGVSAIEIKSGYGLDLASERKMLRVARQLGERFPVSVYTTFLGAHALPPEYAGRADAYIDEVCERMLPTLADEGLVDAVDVFCERIGFSLAQTERVFEAATRRGLPVKLHAEQLSNAGGTALAARYRALSADHLEFLDEAGVEAMKAAGTVAVLLPGAYYFIRETQLPPIELLRKHGVPIALATDHNPGTSPLESLLLTLNMGCTLFRMTVPEVLQGVTRHAAAALGRADRHGALEIGRQADFAVWSVGSLAELAYWIGRPLCEQVVRGGATVFRRMNG</sequence>
<dbReference type="EC" id="3.5.2.7" evidence="1"/>
<dbReference type="EMBL" id="CP001025">
    <property type="protein sequence ID" value="ACB64565.1"/>
    <property type="molecule type" value="Genomic_DNA"/>
</dbReference>
<dbReference type="RefSeq" id="WP_012364258.1">
    <property type="nucleotide sequence ID" value="NC_010551.1"/>
</dbReference>
<dbReference type="SMR" id="B1YT76"/>
<dbReference type="KEGG" id="bac:BamMC406_2084"/>
<dbReference type="HOGENOM" id="CLU_041647_0_0_4"/>
<dbReference type="OrthoDB" id="9776455at2"/>
<dbReference type="UniPathway" id="UPA00379">
    <property type="reaction ID" value="UER00551"/>
</dbReference>
<dbReference type="Proteomes" id="UP000001680">
    <property type="component" value="Chromosome 1"/>
</dbReference>
<dbReference type="GO" id="GO:0005737">
    <property type="term" value="C:cytoplasm"/>
    <property type="evidence" value="ECO:0007669"/>
    <property type="project" value="UniProtKB-SubCell"/>
</dbReference>
<dbReference type="GO" id="GO:0050480">
    <property type="term" value="F:imidazolonepropionase activity"/>
    <property type="evidence" value="ECO:0007669"/>
    <property type="project" value="UniProtKB-UniRule"/>
</dbReference>
<dbReference type="GO" id="GO:0005506">
    <property type="term" value="F:iron ion binding"/>
    <property type="evidence" value="ECO:0007669"/>
    <property type="project" value="UniProtKB-UniRule"/>
</dbReference>
<dbReference type="GO" id="GO:0008270">
    <property type="term" value="F:zinc ion binding"/>
    <property type="evidence" value="ECO:0007669"/>
    <property type="project" value="UniProtKB-UniRule"/>
</dbReference>
<dbReference type="GO" id="GO:0019556">
    <property type="term" value="P:L-histidine catabolic process to glutamate and formamide"/>
    <property type="evidence" value="ECO:0007669"/>
    <property type="project" value="UniProtKB-UniPathway"/>
</dbReference>
<dbReference type="GO" id="GO:0019557">
    <property type="term" value="P:L-histidine catabolic process to glutamate and formate"/>
    <property type="evidence" value="ECO:0007669"/>
    <property type="project" value="UniProtKB-UniPathway"/>
</dbReference>
<dbReference type="CDD" id="cd01296">
    <property type="entry name" value="Imidazolone-5PH"/>
    <property type="match status" value="1"/>
</dbReference>
<dbReference type="FunFam" id="3.20.20.140:FF:000007">
    <property type="entry name" value="Imidazolonepropionase"/>
    <property type="match status" value="1"/>
</dbReference>
<dbReference type="Gene3D" id="3.20.20.140">
    <property type="entry name" value="Metal-dependent hydrolases"/>
    <property type="match status" value="1"/>
</dbReference>
<dbReference type="Gene3D" id="2.30.40.10">
    <property type="entry name" value="Urease, subunit C, domain 1"/>
    <property type="match status" value="1"/>
</dbReference>
<dbReference type="HAMAP" id="MF_00372">
    <property type="entry name" value="HutI"/>
    <property type="match status" value="1"/>
</dbReference>
<dbReference type="InterPro" id="IPR006680">
    <property type="entry name" value="Amidohydro-rel"/>
</dbReference>
<dbReference type="InterPro" id="IPR005920">
    <property type="entry name" value="HutI"/>
</dbReference>
<dbReference type="InterPro" id="IPR011059">
    <property type="entry name" value="Metal-dep_hydrolase_composite"/>
</dbReference>
<dbReference type="InterPro" id="IPR032466">
    <property type="entry name" value="Metal_Hydrolase"/>
</dbReference>
<dbReference type="NCBIfam" id="TIGR01224">
    <property type="entry name" value="hutI"/>
    <property type="match status" value="1"/>
</dbReference>
<dbReference type="PANTHER" id="PTHR42752">
    <property type="entry name" value="IMIDAZOLONEPROPIONASE"/>
    <property type="match status" value="1"/>
</dbReference>
<dbReference type="PANTHER" id="PTHR42752:SF1">
    <property type="entry name" value="IMIDAZOLONEPROPIONASE-RELATED"/>
    <property type="match status" value="1"/>
</dbReference>
<dbReference type="Pfam" id="PF01979">
    <property type="entry name" value="Amidohydro_1"/>
    <property type="match status" value="1"/>
</dbReference>
<dbReference type="SUPFAM" id="SSF51338">
    <property type="entry name" value="Composite domain of metallo-dependent hydrolases"/>
    <property type="match status" value="1"/>
</dbReference>
<dbReference type="SUPFAM" id="SSF51556">
    <property type="entry name" value="Metallo-dependent hydrolases"/>
    <property type="match status" value="1"/>
</dbReference>
<accession>B1YT76</accession>